<sequence length="345" mass="37467">MMFPGLLAPPAGYPSLLRPTPTLTLPQSLQSAFSGHSSFLVEDLIRISRPPAYLPRGSVPTPSMSPPRPGAPAALTDTGASDLGSPGPGSRRGGSPQTAVSPASEPTFLKFGVNAILSSAPRTETSPTLLQSVPPKTFAFPYFEGSFQPFIRSSYFPASSSVVPIPGTFSWPLAARGKPRRGMLRRAVFSDVQRKALEKMFQKQKYISKPDRKKLAAKLGLKDSQVKIWFQNRRMKWRNSKERELLSSGGCREQTLPTKLNPHPDLSDVGQKGPGDDDDEEDEGPGSPRPRLVYHAAPADPRHLRDPRLEAPLPTSPARSGSPDKASDFSDSEDDEEGEEEITVS</sequence>
<comment type="function">
    <text evidence="1">Could have a role in patterning the central nervous system during embryogenesis. Has a key role in regulating the distinct phenotypic features that distinguish two major classes of ventral interneurons, V0 and V1 neurons. Regulates the transcription factor profile, neurotransmitter phenotype, intraspinal migratory path and axonal trajectory of V0 neurons, features that differentiate them from an adjacent set of V1 neurons (By similarity).</text>
</comment>
<comment type="subcellular location">
    <subcellularLocation>
        <location evidence="2">Nucleus</location>
    </subcellularLocation>
</comment>
<comment type="similarity">
    <text evidence="4">Belongs to the H2.0 homeobox family.</text>
</comment>
<organism>
    <name type="scientific">Bos taurus</name>
    <name type="common">Bovine</name>
    <dbReference type="NCBI Taxonomy" id="9913"/>
    <lineage>
        <taxon>Eukaryota</taxon>
        <taxon>Metazoa</taxon>
        <taxon>Chordata</taxon>
        <taxon>Craniata</taxon>
        <taxon>Vertebrata</taxon>
        <taxon>Euteleostomi</taxon>
        <taxon>Mammalia</taxon>
        <taxon>Eutheria</taxon>
        <taxon>Laurasiatheria</taxon>
        <taxon>Artiodactyla</taxon>
        <taxon>Ruminantia</taxon>
        <taxon>Pecora</taxon>
        <taxon>Bovidae</taxon>
        <taxon>Bovinae</taxon>
        <taxon>Bos</taxon>
    </lineage>
</organism>
<feature type="chain" id="PRO_0000302842" description="Homeobox protein DBX1">
    <location>
        <begin position="1"/>
        <end position="345"/>
    </location>
</feature>
<feature type="DNA-binding region" description="Homeobox" evidence="2">
    <location>
        <begin position="182"/>
        <end position="241"/>
    </location>
</feature>
<feature type="region of interest" description="Disordered" evidence="3">
    <location>
        <begin position="55"/>
        <end position="103"/>
    </location>
</feature>
<feature type="region of interest" description="Disordered" evidence="3">
    <location>
        <begin position="241"/>
        <end position="345"/>
    </location>
</feature>
<feature type="compositionally biased region" description="Basic and acidic residues" evidence="3">
    <location>
        <begin position="300"/>
        <end position="309"/>
    </location>
</feature>
<feature type="compositionally biased region" description="Acidic residues" evidence="3">
    <location>
        <begin position="330"/>
        <end position="345"/>
    </location>
</feature>
<dbReference type="EMBL" id="BC142482">
    <property type="protein sequence ID" value="AAI42483.1"/>
    <property type="molecule type" value="mRNA"/>
</dbReference>
<dbReference type="RefSeq" id="NP_001092468.1">
    <property type="nucleotide sequence ID" value="NM_001098998.1"/>
</dbReference>
<dbReference type="SMR" id="A5PKG8"/>
<dbReference type="FunCoup" id="A5PKG8">
    <property type="interactions" value="66"/>
</dbReference>
<dbReference type="STRING" id="9913.ENSBTAP00000003543"/>
<dbReference type="PaxDb" id="9913-ENSBTAP00000003543"/>
<dbReference type="Ensembl" id="ENSBTAT00000003543.4">
    <property type="protein sequence ID" value="ENSBTAP00000003543.3"/>
    <property type="gene ID" value="ENSBTAG00000002733.4"/>
</dbReference>
<dbReference type="GeneID" id="517514"/>
<dbReference type="KEGG" id="bta:517514"/>
<dbReference type="CTD" id="120237"/>
<dbReference type="VEuPathDB" id="HostDB:ENSBTAG00000002733"/>
<dbReference type="VGNC" id="VGNC:27897">
    <property type="gene designation" value="DBX1"/>
</dbReference>
<dbReference type="eggNOG" id="KOG0488">
    <property type="taxonomic scope" value="Eukaryota"/>
</dbReference>
<dbReference type="GeneTree" id="ENSGT00950000183093"/>
<dbReference type="HOGENOM" id="CLU_053401_0_0_1"/>
<dbReference type="InParanoid" id="A5PKG8"/>
<dbReference type="OMA" id="RHSLAYH"/>
<dbReference type="OrthoDB" id="10048112at2759"/>
<dbReference type="TreeFam" id="TF350735"/>
<dbReference type="Proteomes" id="UP000009136">
    <property type="component" value="Chromosome 29"/>
</dbReference>
<dbReference type="Bgee" id="ENSBTAG00000002733">
    <property type="expression patterns" value="Expressed in oocyte and 9 other cell types or tissues"/>
</dbReference>
<dbReference type="GO" id="GO:0005634">
    <property type="term" value="C:nucleus"/>
    <property type="evidence" value="ECO:0007669"/>
    <property type="project" value="UniProtKB-SubCell"/>
</dbReference>
<dbReference type="GO" id="GO:0003677">
    <property type="term" value="F:DNA binding"/>
    <property type="evidence" value="ECO:0007669"/>
    <property type="project" value="UniProtKB-KW"/>
</dbReference>
<dbReference type="GO" id="GO:0000981">
    <property type="term" value="F:DNA-binding transcription factor activity, RNA polymerase II-specific"/>
    <property type="evidence" value="ECO:0007669"/>
    <property type="project" value="InterPro"/>
</dbReference>
<dbReference type="GO" id="GO:0021515">
    <property type="term" value="P:cell differentiation in spinal cord"/>
    <property type="evidence" value="ECO:0000318"/>
    <property type="project" value="GO_Central"/>
</dbReference>
<dbReference type="GO" id="GO:0006357">
    <property type="term" value="P:regulation of transcription by RNA polymerase II"/>
    <property type="evidence" value="ECO:0000318"/>
    <property type="project" value="GO_Central"/>
</dbReference>
<dbReference type="GO" id="GO:0021521">
    <property type="term" value="P:ventral spinal cord interneuron specification"/>
    <property type="evidence" value="ECO:0007669"/>
    <property type="project" value="Ensembl"/>
</dbReference>
<dbReference type="CDD" id="cd00086">
    <property type="entry name" value="homeodomain"/>
    <property type="match status" value="1"/>
</dbReference>
<dbReference type="FunFam" id="1.10.10.60:FF:000177">
    <property type="entry name" value="Homeobox protein DBX1"/>
    <property type="match status" value="1"/>
</dbReference>
<dbReference type="Gene3D" id="1.10.10.60">
    <property type="entry name" value="Homeodomain-like"/>
    <property type="match status" value="1"/>
</dbReference>
<dbReference type="InterPro" id="IPR051662">
    <property type="entry name" value="H2.0_Homeobox_NeuralPatt"/>
</dbReference>
<dbReference type="InterPro" id="IPR001356">
    <property type="entry name" value="HD"/>
</dbReference>
<dbReference type="InterPro" id="IPR020479">
    <property type="entry name" value="HD_metazoa"/>
</dbReference>
<dbReference type="InterPro" id="IPR017970">
    <property type="entry name" value="Homeobox_CS"/>
</dbReference>
<dbReference type="InterPro" id="IPR009057">
    <property type="entry name" value="Homeodomain-like_sf"/>
</dbReference>
<dbReference type="InterPro" id="IPR000047">
    <property type="entry name" value="HTH_motif"/>
</dbReference>
<dbReference type="PANTHER" id="PTHR24331">
    <property type="entry name" value="DBX"/>
    <property type="match status" value="1"/>
</dbReference>
<dbReference type="PANTHER" id="PTHR24331:SF6">
    <property type="entry name" value="HOMEOBOX PROTEIN DBX1"/>
    <property type="match status" value="1"/>
</dbReference>
<dbReference type="Pfam" id="PF00046">
    <property type="entry name" value="Homeodomain"/>
    <property type="match status" value="1"/>
</dbReference>
<dbReference type="PRINTS" id="PR00024">
    <property type="entry name" value="HOMEOBOX"/>
</dbReference>
<dbReference type="PRINTS" id="PR00031">
    <property type="entry name" value="HTHREPRESSR"/>
</dbReference>
<dbReference type="SMART" id="SM00389">
    <property type="entry name" value="HOX"/>
    <property type="match status" value="1"/>
</dbReference>
<dbReference type="SUPFAM" id="SSF46689">
    <property type="entry name" value="Homeodomain-like"/>
    <property type="match status" value="1"/>
</dbReference>
<dbReference type="PROSITE" id="PS00027">
    <property type="entry name" value="HOMEOBOX_1"/>
    <property type="match status" value="1"/>
</dbReference>
<dbReference type="PROSITE" id="PS50071">
    <property type="entry name" value="HOMEOBOX_2"/>
    <property type="match status" value="1"/>
</dbReference>
<gene>
    <name type="primary">DBX1</name>
</gene>
<proteinExistence type="evidence at transcript level"/>
<accession>A5PKG8</accession>
<evidence type="ECO:0000250" key="1"/>
<evidence type="ECO:0000255" key="2">
    <source>
        <dbReference type="PROSITE-ProRule" id="PRU00108"/>
    </source>
</evidence>
<evidence type="ECO:0000256" key="3">
    <source>
        <dbReference type="SAM" id="MobiDB-lite"/>
    </source>
</evidence>
<evidence type="ECO:0000305" key="4"/>
<reference key="1">
    <citation type="submission" date="2007-06" db="EMBL/GenBank/DDBJ databases">
        <authorList>
            <consortium name="NIH - Mammalian Gene Collection (MGC) project"/>
        </authorList>
    </citation>
    <scope>NUCLEOTIDE SEQUENCE [LARGE SCALE MRNA]</scope>
    <source>
        <strain>Hereford</strain>
        <tissue>Fetal muscle</tissue>
    </source>
</reference>
<keyword id="KW-0217">Developmental protein</keyword>
<keyword id="KW-0238">DNA-binding</keyword>
<keyword id="KW-0371">Homeobox</keyword>
<keyword id="KW-0539">Nucleus</keyword>
<keyword id="KW-1185">Reference proteome</keyword>
<name>DBX1_BOVIN</name>
<protein>
    <recommendedName>
        <fullName>Homeobox protein DBX1</fullName>
    </recommendedName>
    <alternativeName>
        <fullName>Developing brain homeobox protein 1</fullName>
    </alternativeName>
</protein>